<keyword id="KW-1003">Cell membrane</keyword>
<keyword id="KW-0961">Cell wall biogenesis/degradation</keyword>
<keyword id="KW-0472">Membrane</keyword>
<keyword id="KW-1185">Reference proteome</keyword>
<keyword id="KW-0777">Teichoic acid biosynthesis</keyword>
<keyword id="KW-0808">Transferase</keyword>
<dbReference type="EC" id="2.7.8.12" evidence="2 4 5 6"/>
<dbReference type="EMBL" id="X15200">
    <property type="protein sequence ID" value="CAA33271.1"/>
    <property type="molecule type" value="Genomic_DNA"/>
</dbReference>
<dbReference type="EMBL" id="AL009126">
    <property type="protein sequence ID" value="CAB15589.1"/>
    <property type="molecule type" value="Genomic_DNA"/>
</dbReference>
<dbReference type="PIR" id="S06049">
    <property type="entry name" value="S06049"/>
</dbReference>
<dbReference type="RefSeq" id="NP_391453.1">
    <property type="nucleotide sequence ID" value="NC_000964.3"/>
</dbReference>
<dbReference type="RefSeq" id="WP_003243463.1">
    <property type="nucleotide sequence ID" value="NZ_OZ025638.1"/>
</dbReference>
<dbReference type="SMR" id="P13485"/>
<dbReference type="FunCoup" id="P13485">
    <property type="interactions" value="63"/>
</dbReference>
<dbReference type="IntAct" id="P13485">
    <property type="interactions" value="6"/>
</dbReference>
<dbReference type="STRING" id="224308.BSU35720"/>
<dbReference type="jPOST" id="P13485"/>
<dbReference type="PaxDb" id="224308-BSU35720"/>
<dbReference type="EnsemblBacteria" id="CAB15589">
    <property type="protein sequence ID" value="CAB15589"/>
    <property type="gene ID" value="BSU_35720"/>
</dbReference>
<dbReference type="GeneID" id="936803"/>
<dbReference type="KEGG" id="bsu:BSU35720"/>
<dbReference type="PATRIC" id="fig|224308.179.peg.3867"/>
<dbReference type="eggNOG" id="COG1887">
    <property type="taxonomic scope" value="Bacteria"/>
</dbReference>
<dbReference type="InParanoid" id="P13485"/>
<dbReference type="OrthoDB" id="9811865at2"/>
<dbReference type="PhylomeDB" id="P13485"/>
<dbReference type="BioCyc" id="BSUB:BSU35720-MONOMER"/>
<dbReference type="BioCyc" id="MetaCyc:BSU35720-MONOMER"/>
<dbReference type="SABIO-RK" id="P13485"/>
<dbReference type="UniPathway" id="UPA00827"/>
<dbReference type="Proteomes" id="UP000001570">
    <property type="component" value="Chromosome"/>
</dbReference>
<dbReference type="GO" id="GO:0005886">
    <property type="term" value="C:plasma membrane"/>
    <property type="evidence" value="ECO:0007669"/>
    <property type="project" value="UniProtKB-SubCell"/>
</dbReference>
<dbReference type="GO" id="GO:0047355">
    <property type="term" value="F:CDP-glycerol glycerophosphotransferase activity"/>
    <property type="evidence" value="ECO:0007669"/>
    <property type="project" value="UniProtKB-EC"/>
</dbReference>
<dbReference type="GO" id="GO:0071555">
    <property type="term" value="P:cell wall organization"/>
    <property type="evidence" value="ECO:0007669"/>
    <property type="project" value="UniProtKB-KW"/>
</dbReference>
<dbReference type="GO" id="GO:0019350">
    <property type="term" value="P:teichoic acid biosynthetic process"/>
    <property type="evidence" value="ECO:0007669"/>
    <property type="project" value="UniProtKB-KW"/>
</dbReference>
<dbReference type="Gene3D" id="3.40.50.11820">
    <property type="match status" value="1"/>
</dbReference>
<dbReference type="Gene3D" id="3.40.50.12580">
    <property type="match status" value="1"/>
</dbReference>
<dbReference type="InterPro" id="IPR007554">
    <property type="entry name" value="Glycerophosphate_synth"/>
</dbReference>
<dbReference type="InterPro" id="IPR043148">
    <property type="entry name" value="TagF_C"/>
</dbReference>
<dbReference type="InterPro" id="IPR043149">
    <property type="entry name" value="TagF_N"/>
</dbReference>
<dbReference type="InterPro" id="IPR051612">
    <property type="entry name" value="Teichoic_Acid_Biosynth"/>
</dbReference>
<dbReference type="PANTHER" id="PTHR37316">
    <property type="entry name" value="TEICHOIC ACID GLYCEROL-PHOSPHATE PRIMASE"/>
    <property type="match status" value="1"/>
</dbReference>
<dbReference type="PANTHER" id="PTHR37316:SF3">
    <property type="entry name" value="TEICHOIC ACID GLYCEROL-PHOSPHATE TRANSFERASE"/>
    <property type="match status" value="1"/>
</dbReference>
<dbReference type="Pfam" id="PF04464">
    <property type="entry name" value="Glyphos_transf"/>
    <property type="match status" value="1"/>
</dbReference>
<dbReference type="SUPFAM" id="SSF53756">
    <property type="entry name" value="UDP-Glycosyltransferase/glycogen phosphorylase"/>
    <property type="match status" value="1"/>
</dbReference>
<sequence length="746" mass="88063">MSLVVDTNKRKQKGKSFYTEEQKKVMIENTVIKCILKSLKNNLGSLELLISIDSEHQFLEDYQLFLKLKERRSGTESEFPLQNTGSLEYKTEINAHVLPMPVEMGQTYDFYVEFRKKYEDAEQEPLLKRLSAEVNSIERAFHVDQTTELLILPYTTDKGNFSIKVKREAKIIRFDQIEISSEEISITGYAGYLSSENQYRIKNLNLILKKGGETPIEEKFPIKLERKTHGLENMRADGFVPELYDFEVKVPLKEIPFSNEKRYVYRLFMEYICNDDEGTDIQFNSTALVLGDRKNKLKGLVSIIKTNNAPVRYEVFKKKKKQTLGIRVNDYSLKTRMKYFIKGKKKRLVSKIKKITKMRNKLITKTYKSLFMMASRMPVKRKTVIFESFNGKQYSCNPRAIYEYMRENHPEYKMYWSVNKQYSAPFDEKGIPYINRLSLKWLFAMARAEYWVVNSRLPLWIPKPSHTTYLQTWHGTPLKRLAMDMEEVHMPGTNTKKYKRNFIKEASNWDYLISPNGYSTEIFTRAFQFNKTMIESGYPRNDFLHNDNNEETISLIKSRLNIPRDKKVILYAPTWRDDQFYAKGRYKFDLDLDLHQLRQELGNEYIVILRMHYLVAENFDLGPFEGFAYDFSAYEDIRELYMVSDLLITDYSSVFFDFANLKRPMLFFVPDIETYRDKLRGFYFDFEKEAPGPLVKTTEETIEAIKQISSPDYKLPVSFGPFYDKFCYLESGRSSEKVVNTVFKAE</sequence>
<reference key="1">
    <citation type="journal article" date="1989" name="Mol. Microbiol.">
        <title>The nucleotide sequence of the rodC operon of Bacillus subtilis.</title>
        <authorList>
            <person name="Honeyman A.L."/>
            <person name="Stewart G.C."/>
        </authorList>
    </citation>
    <scope>NUCLEOTIDE SEQUENCE [GENOMIC DNA]</scope>
    <scope>MUTANT RODC1</scope>
    <source>
        <strain>168</strain>
    </source>
</reference>
<reference key="2">
    <citation type="journal article" date="1997" name="Nature">
        <title>The complete genome sequence of the Gram-positive bacterium Bacillus subtilis.</title>
        <authorList>
            <person name="Kunst F."/>
            <person name="Ogasawara N."/>
            <person name="Moszer I."/>
            <person name="Albertini A.M."/>
            <person name="Alloni G."/>
            <person name="Azevedo V."/>
            <person name="Bertero M.G."/>
            <person name="Bessieres P."/>
            <person name="Bolotin A."/>
            <person name="Borchert S."/>
            <person name="Borriss R."/>
            <person name="Boursier L."/>
            <person name="Brans A."/>
            <person name="Braun M."/>
            <person name="Brignell S.C."/>
            <person name="Bron S."/>
            <person name="Brouillet S."/>
            <person name="Bruschi C.V."/>
            <person name="Caldwell B."/>
            <person name="Capuano V."/>
            <person name="Carter N.M."/>
            <person name="Choi S.-K."/>
            <person name="Codani J.-J."/>
            <person name="Connerton I.F."/>
            <person name="Cummings N.J."/>
            <person name="Daniel R.A."/>
            <person name="Denizot F."/>
            <person name="Devine K.M."/>
            <person name="Duesterhoeft A."/>
            <person name="Ehrlich S.D."/>
            <person name="Emmerson P.T."/>
            <person name="Entian K.-D."/>
            <person name="Errington J."/>
            <person name="Fabret C."/>
            <person name="Ferrari E."/>
            <person name="Foulger D."/>
            <person name="Fritz C."/>
            <person name="Fujita M."/>
            <person name="Fujita Y."/>
            <person name="Fuma S."/>
            <person name="Galizzi A."/>
            <person name="Galleron N."/>
            <person name="Ghim S.-Y."/>
            <person name="Glaser P."/>
            <person name="Goffeau A."/>
            <person name="Golightly E.J."/>
            <person name="Grandi G."/>
            <person name="Guiseppi G."/>
            <person name="Guy B.J."/>
            <person name="Haga K."/>
            <person name="Haiech J."/>
            <person name="Harwood C.R."/>
            <person name="Henaut A."/>
            <person name="Hilbert H."/>
            <person name="Holsappel S."/>
            <person name="Hosono S."/>
            <person name="Hullo M.-F."/>
            <person name="Itaya M."/>
            <person name="Jones L.-M."/>
            <person name="Joris B."/>
            <person name="Karamata D."/>
            <person name="Kasahara Y."/>
            <person name="Klaerr-Blanchard M."/>
            <person name="Klein C."/>
            <person name="Kobayashi Y."/>
            <person name="Koetter P."/>
            <person name="Koningstein G."/>
            <person name="Krogh S."/>
            <person name="Kumano M."/>
            <person name="Kurita K."/>
            <person name="Lapidus A."/>
            <person name="Lardinois S."/>
            <person name="Lauber J."/>
            <person name="Lazarevic V."/>
            <person name="Lee S.-M."/>
            <person name="Levine A."/>
            <person name="Liu H."/>
            <person name="Masuda S."/>
            <person name="Mauel C."/>
            <person name="Medigue C."/>
            <person name="Medina N."/>
            <person name="Mellado R.P."/>
            <person name="Mizuno M."/>
            <person name="Moestl D."/>
            <person name="Nakai S."/>
            <person name="Noback M."/>
            <person name="Noone D."/>
            <person name="O'Reilly M."/>
            <person name="Ogawa K."/>
            <person name="Ogiwara A."/>
            <person name="Oudega B."/>
            <person name="Park S.-H."/>
            <person name="Parro V."/>
            <person name="Pohl T.M."/>
            <person name="Portetelle D."/>
            <person name="Porwollik S."/>
            <person name="Prescott A.M."/>
            <person name="Presecan E."/>
            <person name="Pujic P."/>
            <person name="Purnelle B."/>
            <person name="Rapoport G."/>
            <person name="Rey M."/>
            <person name="Reynolds S."/>
            <person name="Rieger M."/>
            <person name="Rivolta C."/>
            <person name="Rocha E."/>
            <person name="Roche B."/>
            <person name="Rose M."/>
            <person name="Sadaie Y."/>
            <person name="Sato T."/>
            <person name="Scanlan E."/>
            <person name="Schleich S."/>
            <person name="Schroeter R."/>
            <person name="Scoffone F."/>
            <person name="Sekiguchi J."/>
            <person name="Sekowska A."/>
            <person name="Seror S.J."/>
            <person name="Serror P."/>
            <person name="Shin B.-S."/>
            <person name="Soldo B."/>
            <person name="Sorokin A."/>
            <person name="Tacconi E."/>
            <person name="Takagi T."/>
            <person name="Takahashi H."/>
            <person name="Takemaru K."/>
            <person name="Takeuchi M."/>
            <person name="Tamakoshi A."/>
            <person name="Tanaka T."/>
            <person name="Terpstra P."/>
            <person name="Tognoni A."/>
            <person name="Tosato V."/>
            <person name="Uchiyama S."/>
            <person name="Vandenbol M."/>
            <person name="Vannier F."/>
            <person name="Vassarotti A."/>
            <person name="Viari A."/>
            <person name="Wambutt R."/>
            <person name="Wedler E."/>
            <person name="Wedler H."/>
            <person name="Weitzenegger T."/>
            <person name="Winters P."/>
            <person name="Wipat A."/>
            <person name="Yamamoto H."/>
            <person name="Yamane K."/>
            <person name="Yasumoto K."/>
            <person name="Yata K."/>
            <person name="Yoshida K."/>
            <person name="Yoshikawa H.-F."/>
            <person name="Zumstein E."/>
            <person name="Yoshikawa H."/>
            <person name="Danchin A."/>
        </authorList>
    </citation>
    <scope>NUCLEOTIDE SEQUENCE [LARGE SCALE GENOMIC DNA]</scope>
    <source>
        <strain>168</strain>
    </source>
</reference>
<reference key="3">
    <citation type="journal article" date="1992" name="J. Bacteriol.">
        <title>CDP-glycerol:poly(glycerophosphate) glycerophosphotransferase, which is involved in the synthesis of the major wall teichoic acid in Bacillus subtilis 168, is encoded by tagF (rodC).</title>
        <authorList>
            <person name="Pooley H.M."/>
            <person name="Abellan F.-X."/>
            <person name="Karamata D."/>
        </authorList>
    </citation>
    <scope>FUNCTION</scope>
    <source>
        <strain>168</strain>
    </source>
</reference>
<reference key="4">
    <citation type="journal article" date="2003" name="J. Biol. Chem.">
        <title>Purified, recombinant TagF protein from Bacillus subtilis 168 catalyzes the polymerization of glycerol phosphate onto a membrane acceptor in vitro.</title>
        <authorList>
            <person name="Schertzer J.W."/>
            <person name="Brown E.D."/>
        </authorList>
    </citation>
    <scope>FUNCTION</scope>
    <scope>CATALYTIC ACTIVITY</scope>
    <scope>BIOPHYSICOCHEMICAL PROPERTIES</scope>
    <source>
        <strain>168 / EB6</strain>
    </source>
</reference>
<reference key="5">
    <citation type="journal article" date="2003" name="Mol. Microbiol.">
        <title>Genes controlled by the essential YycG/YycF two-component system of Bacillus subtilis revealed through a novel hybrid regulator approach.</title>
        <authorList>
            <person name="Howell A."/>
            <person name="Dubrac S."/>
            <person name="Andersen K.K."/>
            <person name="Noone D."/>
            <person name="Fert J."/>
            <person name="Msadek T."/>
            <person name="Devine K."/>
        </authorList>
    </citation>
    <scope>REGULATION BY WALR/WALK</scope>
</reference>
<reference key="6">
    <citation type="journal article" date="2005" name="J. Biol. Chem.">
        <title>Two conserved histidine residues are critical to the function of the TagF-like family of enzymes.</title>
        <authorList>
            <person name="Schertzer J.W."/>
            <person name="Bhavsar A.P."/>
            <person name="Brown E.D."/>
        </authorList>
    </citation>
    <scope>CATALYTIC ACTIVITY</scope>
    <scope>BIOPHYSICOCHEMICAL PROPERTIES</scope>
    <scope>MUTAGENESIS OF HIS-474; GLU-604; HIS-612; ASP-630; GLU-639; ASP-645 AND ASP-650</scope>
    <source>
        <strain>168 / EB6</strain>
    </source>
</reference>
<reference key="7">
    <citation type="journal article" date="2008" name="ChemBioChem">
        <title>The wall teichoic acid polymerase TagF efficiently synthesizes poly(glycerol phosphate) on the TagB product lipid III.</title>
        <authorList>
            <person name="Pereira M.P."/>
            <person name="Schertzer J.W."/>
            <person name="D'Elia M.A."/>
            <person name="Koteva K.P."/>
            <person name="Hughes D.W."/>
            <person name="Wright G.D."/>
            <person name="Brown E.D."/>
        </authorList>
    </citation>
    <scope>CATALYTIC ACTIVITY</scope>
    <scope>SUBSTRATE SPECIFICITY</scope>
</reference>
<reference key="8">
    <citation type="journal article" date="2009" name="J. Biol. Chem.">
        <title>The wall teichoic acid polymerase TagF is non-processive in vitro and amenable to study using steady state kinetic analysis.</title>
        <authorList>
            <person name="Sewell E.W."/>
            <person name="Pereira M.P."/>
            <person name="Brown E.D."/>
        </authorList>
    </citation>
    <scope>CATALYTIC ACTIVITY</scope>
    <scope>BIOPHYSICOCHEMICAL PROPERTIES</scope>
    <scope>SUBSTRATE SPECIFICITY</scope>
    <scope>REACTION MECHANISM</scope>
    <source>
        <strain>168 / EB6</strain>
    </source>
</reference>
<protein>
    <recommendedName>
        <fullName evidence="8">Teichoic acid poly(glycerol phosphate) polymerase</fullName>
        <ecNumber evidence="2 4 5 6">2.7.8.12</ecNumber>
    </recommendedName>
    <alternativeName>
        <fullName>CDP-glycerol:poly(glycerophosphate) glycerophosphotransferase</fullName>
    </alternativeName>
    <alternativeName>
        <fullName>CGPTase</fullName>
    </alternativeName>
    <alternativeName>
        <fullName>Major teichoic acid biosynthesis protein F</fullName>
    </alternativeName>
    <alternativeName>
        <fullName evidence="7">Poly(glycerol phosphate) polymerase</fullName>
    </alternativeName>
    <alternativeName>
        <fullName>Tag polymerase</fullName>
    </alternativeName>
</protein>
<feature type="chain" id="PRO_0000072422" description="Teichoic acid poly(glycerol phosphate) polymerase">
    <location>
        <begin position="1"/>
        <end position="746"/>
    </location>
</feature>
<feature type="binding site" evidence="1">
    <location>
        <begin position="473"/>
        <end position="477"/>
    </location>
    <ligand>
        <name>CDP-glycerol</name>
        <dbReference type="ChEBI" id="CHEBI:58311"/>
    </ligand>
</feature>
<feature type="binding site" evidence="1">
    <location>
        <position position="540"/>
    </location>
    <ligand>
        <name>CDP-glycerol</name>
        <dbReference type="ChEBI" id="CHEBI:58311"/>
    </ligand>
</feature>
<feature type="binding site" evidence="1">
    <location>
        <begin position="573"/>
        <end position="574"/>
    </location>
    <ligand>
        <name>CDP-glycerol</name>
        <dbReference type="ChEBI" id="CHEBI:58311"/>
    </ligand>
</feature>
<feature type="binding site" evidence="1">
    <location>
        <begin position="610"/>
        <end position="612"/>
    </location>
    <ligand>
        <name>CDP-glycerol</name>
        <dbReference type="ChEBI" id="CHEBI:58311"/>
    </ligand>
</feature>
<feature type="binding site" evidence="1">
    <location>
        <begin position="652"/>
        <end position="653"/>
    </location>
    <ligand>
        <name>CDP-glycerol</name>
        <dbReference type="ChEBI" id="CHEBI:58311"/>
    </ligand>
</feature>
<feature type="binding site" evidence="1">
    <location>
        <position position="657"/>
    </location>
    <ligand>
        <name>CDP-glycerol</name>
        <dbReference type="ChEBI" id="CHEBI:58311"/>
    </ligand>
</feature>
<feature type="sequence variant" description="In mutant rodC1; temperature-sensitive.">
    <original>S</original>
    <variation>F</variation>
    <location>
        <position position="644"/>
    </location>
</feature>
<feature type="mutagenesis site" description="No activity." evidence="4">
    <original>H</original>
    <variation>A</variation>
    <location>
        <position position="474"/>
    </location>
</feature>
<feature type="mutagenesis site" description="No effect on catalytic efficiency." evidence="4">
    <original>E</original>
    <variation>A</variation>
    <location>
        <position position="604"/>
    </location>
</feature>
<feature type="mutagenesis site" description="No activity." evidence="4">
    <original>H</original>
    <variation>A</variation>
    <location>
        <position position="612"/>
    </location>
</feature>
<feature type="mutagenesis site" description="3-fold reduction in catalytic efficiency." evidence="4">
    <original>D</original>
    <variation>A</variation>
    <location>
        <position position="630"/>
    </location>
</feature>
<feature type="mutagenesis site" description="4-fold reduction in catalytic efficiency." evidence="4">
    <original>E</original>
    <variation>A</variation>
    <location>
        <position position="639"/>
    </location>
</feature>
<feature type="mutagenesis site" description="3-fold reduction in catalytic efficiency." evidence="4">
    <original>D</original>
    <variation>A</variation>
    <location>
        <position position="645"/>
    </location>
</feature>
<feature type="mutagenesis site" description="Did not get expressed in heterologous host." evidence="4">
    <original>D</original>
    <variation>A</variation>
    <location>
        <position position="650"/>
    </location>
</feature>
<organism>
    <name type="scientific">Bacillus subtilis (strain 168)</name>
    <dbReference type="NCBI Taxonomy" id="224308"/>
    <lineage>
        <taxon>Bacteria</taxon>
        <taxon>Bacillati</taxon>
        <taxon>Bacillota</taxon>
        <taxon>Bacilli</taxon>
        <taxon>Bacillales</taxon>
        <taxon>Bacillaceae</taxon>
        <taxon>Bacillus</taxon>
    </lineage>
</organism>
<name>TAGF_BACSU</name>
<evidence type="ECO:0000250" key="1">
    <source>
        <dbReference type="UniProtKB" id="Q5HLM5"/>
    </source>
</evidence>
<evidence type="ECO:0000269" key="2">
    <source>
    </source>
</evidence>
<evidence type="ECO:0000269" key="3">
    <source>
    </source>
</evidence>
<evidence type="ECO:0000269" key="4">
    <source>
    </source>
</evidence>
<evidence type="ECO:0000269" key="5">
    <source>
    </source>
</evidence>
<evidence type="ECO:0000269" key="6">
    <source>
    </source>
</evidence>
<evidence type="ECO:0000303" key="7">
    <source>
    </source>
</evidence>
<evidence type="ECO:0000305" key="8"/>
<accession>P13485</accession>
<gene>
    <name type="primary">tagF</name>
    <name type="synonym">rodC</name>
    <name type="synonym">tag3</name>
    <name type="ordered locus">BSU35720</name>
</gene>
<proteinExistence type="evidence at protein level"/>
<comment type="function">
    <text evidence="2 3">Responsible for the polymerization of the main chain of the major teichoic acid by sequential transfer of glycerol phosphate units from CDP-glycerol to the disaccharide linkage unit. Synthesizes polymers of approximately 35 glycerol phosphate units in length.</text>
</comment>
<comment type="catalytic activity">
    <reaction evidence="2 4 5 6">
        <text>4-O-[(2R)-glycerylphospho]-N-acetyl-beta-D-mannosaminyl-(1-&gt;4)-N-acetyl-alpha-D-glucosaminyl di-trans,octa-cis-undecaprenyl diphosphate + n CDP-glycerol = 4-O-{[(2R)-1-glycerylphospho](n)-(2R)-1-glycerylphospho}-N-acetyl-beta-D-mannosaminyl-(1-&gt;4)-N-acetyl-alpha-D-glucosaminyl undecaprenyl diphosphate + n CMP + n H(+)</text>
        <dbReference type="Rhea" id="RHEA:13565"/>
        <dbReference type="Rhea" id="RHEA-COMP:12597"/>
        <dbReference type="ChEBI" id="CHEBI:15378"/>
        <dbReference type="ChEBI" id="CHEBI:58311"/>
        <dbReference type="ChEBI" id="CHEBI:60377"/>
        <dbReference type="ChEBI" id="CHEBI:132211"/>
        <dbReference type="ChEBI" id="CHEBI:132224"/>
        <dbReference type="EC" id="2.7.8.12"/>
    </reaction>
</comment>
<comment type="biophysicochemical properties">
    <kinetics>
        <KM evidence="2">340 uM for CDP-glycerol</KM>
        <KM evidence="4">230 uM for CDP-glycerol</KM>
        <KM evidence="6">152 uM for CDP-glycerol</KM>
        <KM evidence="5">2.6 uM for lipid III analog</KM>
        <text evidence="4 5">kcat for CDP-glycerol is 14 min(-1) (PubMed:16141206). kcat for lipid III analog is 26 sec(-1) (PubMed:18465758).</text>
    </kinetics>
    <phDependence>
        <text evidence="4">Optimum pH is 8.</text>
    </phDependence>
</comment>
<comment type="pathway">
    <text>Cell wall biogenesis; poly(glycerol phosphate) teichoic acid biosynthesis.</text>
</comment>
<comment type="interaction">
    <interactant intactId="EBI-6401722">
        <id>P13485</id>
    </interactant>
    <interactant intactId="EBI-6401730">
        <id>P27621</id>
        <label>tagB</label>
    </interactant>
    <organismsDiffer>false</organismsDiffer>
    <experiments>3</experiments>
</comment>
<comment type="subcellular location">
    <subcellularLocation>
        <location>Cell membrane</location>
        <topology>Peripheral membrane protein</topology>
    </subcellularLocation>
</comment>
<comment type="induction">
    <text>Positively regulated by WalR. Mainly expressed during exponential growth and rapidly shut off as cells enter the stationary phase.</text>
</comment>
<comment type="similarity">
    <text evidence="8">Belongs to the CDP-glycerol glycerophosphotransferase family.</text>
</comment>